<proteinExistence type="inferred from homology"/>
<evidence type="ECO:0000255" key="1">
    <source>
        <dbReference type="HAMAP-Rule" id="MF_01553"/>
    </source>
</evidence>
<protein>
    <recommendedName>
        <fullName evidence="1">DNA-directed RNA polymerase subunit epsilon</fullName>
        <shortName evidence="1">RNAP epsilon subunit</shortName>
        <ecNumber evidence="1">2.7.7.6</ecNumber>
    </recommendedName>
    <alternativeName>
        <fullName evidence="1">RNA polymerase epsilon subunit</fullName>
    </alternativeName>
    <alternativeName>
        <fullName evidence="1">Transcriptase subunit epsilon</fullName>
    </alternativeName>
</protein>
<keyword id="KW-0240">DNA-directed RNA polymerase</keyword>
<keyword id="KW-0548">Nucleotidyltransferase</keyword>
<keyword id="KW-1185">Reference proteome</keyword>
<keyword id="KW-0804">Transcription</keyword>
<keyword id="KW-0808">Transferase</keyword>
<accession>Q92CZ4</accession>
<organism>
    <name type="scientific">Listeria monocytogenes serovar 1/2a (strain ATCC BAA-679 / EGD-e)</name>
    <dbReference type="NCBI Taxonomy" id="169963"/>
    <lineage>
        <taxon>Bacteria</taxon>
        <taxon>Bacillati</taxon>
        <taxon>Bacillota</taxon>
        <taxon>Bacilli</taxon>
        <taxon>Bacillales</taxon>
        <taxon>Listeriaceae</taxon>
        <taxon>Listeria</taxon>
    </lineage>
</organism>
<dbReference type="EC" id="2.7.7.6" evidence="1"/>
<dbReference type="EMBL" id="AL591977">
    <property type="protein sequence ID" value="CAC99106.1"/>
    <property type="molecule type" value="Genomic_DNA"/>
</dbReference>
<dbReference type="PIR" id="AD1203">
    <property type="entry name" value="AD1203"/>
</dbReference>
<dbReference type="RefSeq" id="NP_464553.1">
    <property type="nucleotide sequence ID" value="NC_003210.1"/>
</dbReference>
<dbReference type="RefSeq" id="WP_003722652.1">
    <property type="nucleotide sequence ID" value="NZ_CP149495.1"/>
</dbReference>
<dbReference type="SMR" id="Q92CZ4"/>
<dbReference type="STRING" id="169963.gene:17593684"/>
<dbReference type="PaxDb" id="169963-lmo1028"/>
<dbReference type="EnsemblBacteria" id="CAC99106">
    <property type="protein sequence ID" value="CAC99106"/>
    <property type="gene ID" value="CAC99106"/>
</dbReference>
<dbReference type="GeneID" id="986595"/>
<dbReference type="KEGG" id="lmo:lmo1028"/>
<dbReference type="PATRIC" id="fig|169963.11.peg.1056"/>
<dbReference type="eggNOG" id="COG5503">
    <property type="taxonomic scope" value="Bacteria"/>
</dbReference>
<dbReference type="HOGENOM" id="CLU_187518_0_0_9"/>
<dbReference type="OrthoDB" id="2147503at2"/>
<dbReference type="PhylomeDB" id="Q92CZ4"/>
<dbReference type="BioCyc" id="LMON169963:LMO1028-MONOMER"/>
<dbReference type="Proteomes" id="UP000000817">
    <property type="component" value="Chromosome"/>
</dbReference>
<dbReference type="GO" id="GO:0000428">
    <property type="term" value="C:DNA-directed RNA polymerase complex"/>
    <property type="evidence" value="ECO:0007669"/>
    <property type="project" value="UniProtKB-KW"/>
</dbReference>
<dbReference type="GO" id="GO:0003677">
    <property type="term" value="F:DNA binding"/>
    <property type="evidence" value="ECO:0007669"/>
    <property type="project" value="UniProtKB-UniRule"/>
</dbReference>
<dbReference type="GO" id="GO:0003899">
    <property type="term" value="F:DNA-directed RNA polymerase activity"/>
    <property type="evidence" value="ECO:0007669"/>
    <property type="project" value="UniProtKB-UniRule"/>
</dbReference>
<dbReference type="GO" id="GO:0006351">
    <property type="term" value="P:DNA-templated transcription"/>
    <property type="evidence" value="ECO:0007669"/>
    <property type="project" value="UniProtKB-UniRule"/>
</dbReference>
<dbReference type="Gene3D" id="3.10.20.730">
    <property type="entry name" value="RNAP, epsilon subunit-like"/>
    <property type="match status" value="1"/>
</dbReference>
<dbReference type="HAMAP" id="MF_01553">
    <property type="entry name" value="RNApol_bact_RpoY"/>
    <property type="match status" value="1"/>
</dbReference>
<dbReference type="InterPro" id="IPR009907">
    <property type="entry name" value="RpoY"/>
</dbReference>
<dbReference type="NCBIfam" id="NF010188">
    <property type="entry name" value="PRK13667.1"/>
    <property type="match status" value="1"/>
</dbReference>
<dbReference type="Pfam" id="PF07288">
    <property type="entry name" value="RpoY"/>
    <property type="match status" value="1"/>
</dbReference>
<feature type="chain" id="PRO_0000163130" description="DNA-directed RNA polymerase subunit epsilon">
    <location>
        <begin position="1"/>
        <end position="69"/>
    </location>
</feature>
<reference key="1">
    <citation type="journal article" date="2001" name="Science">
        <title>Comparative genomics of Listeria species.</title>
        <authorList>
            <person name="Glaser P."/>
            <person name="Frangeul L."/>
            <person name="Buchrieser C."/>
            <person name="Rusniok C."/>
            <person name="Amend A."/>
            <person name="Baquero F."/>
            <person name="Berche P."/>
            <person name="Bloecker H."/>
            <person name="Brandt P."/>
            <person name="Chakraborty T."/>
            <person name="Charbit A."/>
            <person name="Chetouani F."/>
            <person name="Couve E."/>
            <person name="de Daruvar A."/>
            <person name="Dehoux P."/>
            <person name="Domann E."/>
            <person name="Dominguez-Bernal G."/>
            <person name="Duchaud E."/>
            <person name="Durant L."/>
            <person name="Dussurget O."/>
            <person name="Entian K.-D."/>
            <person name="Fsihi H."/>
            <person name="Garcia-del Portillo F."/>
            <person name="Garrido P."/>
            <person name="Gautier L."/>
            <person name="Goebel W."/>
            <person name="Gomez-Lopez N."/>
            <person name="Hain T."/>
            <person name="Hauf J."/>
            <person name="Jackson D."/>
            <person name="Jones L.-M."/>
            <person name="Kaerst U."/>
            <person name="Kreft J."/>
            <person name="Kuhn M."/>
            <person name="Kunst F."/>
            <person name="Kurapkat G."/>
            <person name="Madueno E."/>
            <person name="Maitournam A."/>
            <person name="Mata Vicente J."/>
            <person name="Ng E."/>
            <person name="Nedjari H."/>
            <person name="Nordsiek G."/>
            <person name="Novella S."/>
            <person name="de Pablos B."/>
            <person name="Perez-Diaz J.-C."/>
            <person name="Purcell R."/>
            <person name="Remmel B."/>
            <person name="Rose M."/>
            <person name="Schlueter T."/>
            <person name="Simoes N."/>
            <person name="Tierrez A."/>
            <person name="Vazquez-Boland J.-A."/>
            <person name="Voss H."/>
            <person name="Wehland J."/>
            <person name="Cossart P."/>
        </authorList>
    </citation>
    <scope>NUCLEOTIDE SEQUENCE [LARGE SCALE GENOMIC DNA]</scope>
    <source>
        <strain>ATCC BAA-679 / EGD-e</strain>
    </source>
</reference>
<comment type="function">
    <text evidence="1">A non-essential component of RNA polymerase (RNAP).</text>
</comment>
<comment type="catalytic activity">
    <reaction evidence="1">
        <text>RNA(n) + a ribonucleoside 5'-triphosphate = RNA(n+1) + diphosphate</text>
        <dbReference type="Rhea" id="RHEA:21248"/>
        <dbReference type="Rhea" id="RHEA-COMP:14527"/>
        <dbReference type="Rhea" id="RHEA-COMP:17342"/>
        <dbReference type="ChEBI" id="CHEBI:33019"/>
        <dbReference type="ChEBI" id="CHEBI:61557"/>
        <dbReference type="ChEBI" id="CHEBI:140395"/>
        <dbReference type="EC" id="2.7.7.6"/>
    </reaction>
</comment>
<comment type="subunit">
    <text evidence="1">RNAP is composed of a core of 2 alpha, a beta and a beta' subunit. The core is associated with a delta subunit, and at least one of epsilon or omega. When a sigma factor is associated with the core the holoenzyme is formed, which can initiate transcription.</text>
</comment>
<comment type="similarity">
    <text evidence="1">Belongs to the RNA polymerase subunit epsilon family.</text>
</comment>
<name>RPOY_LISMO</name>
<gene>
    <name evidence="1" type="primary">rpoY</name>
    <name type="ordered locus">lmo1028</name>
</gene>
<sequence>MIFKVFYQETLTETPVREKTQSLYVEAESEVKVRQLLKDEPFHIEFVEKISDAHLAYEKENPDFALWEK</sequence>